<gene>
    <name evidence="1" type="primary">dnaA</name>
    <name type="ordered locus">BamMC406_0001</name>
</gene>
<proteinExistence type="inferred from homology"/>
<accession>B1YPZ0</accession>
<dbReference type="EMBL" id="CP001025">
    <property type="protein sequence ID" value="ACB62504.1"/>
    <property type="molecule type" value="Genomic_DNA"/>
</dbReference>
<dbReference type="RefSeq" id="WP_011655544.1">
    <property type="nucleotide sequence ID" value="NC_010551.1"/>
</dbReference>
<dbReference type="SMR" id="B1YPZ0"/>
<dbReference type="GeneID" id="93084589"/>
<dbReference type="KEGG" id="bac:BamMC406_0001"/>
<dbReference type="HOGENOM" id="CLU_026910_0_1_4"/>
<dbReference type="OrthoDB" id="9807019at2"/>
<dbReference type="Proteomes" id="UP000001680">
    <property type="component" value="Chromosome 1"/>
</dbReference>
<dbReference type="GO" id="GO:0005737">
    <property type="term" value="C:cytoplasm"/>
    <property type="evidence" value="ECO:0007669"/>
    <property type="project" value="UniProtKB-SubCell"/>
</dbReference>
<dbReference type="GO" id="GO:0005886">
    <property type="term" value="C:plasma membrane"/>
    <property type="evidence" value="ECO:0007669"/>
    <property type="project" value="TreeGrafter"/>
</dbReference>
<dbReference type="GO" id="GO:0005524">
    <property type="term" value="F:ATP binding"/>
    <property type="evidence" value="ECO:0007669"/>
    <property type="project" value="UniProtKB-UniRule"/>
</dbReference>
<dbReference type="GO" id="GO:0016887">
    <property type="term" value="F:ATP hydrolysis activity"/>
    <property type="evidence" value="ECO:0007669"/>
    <property type="project" value="InterPro"/>
</dbReference>
<dbReference type="GO" id="GO:0003688">
    <property type="term" value="F:DNA replication origin binding"/>
    <property type="evidence" value="ECO:0007669"/>
    <property type="project" value="UniProtKB-UniRule"/>
</dbReference>
<dbReference type="GO" id="GO:0008289">
    <property type="term" value="F:lipid binding"/>
    <property type="evidence" value="ECO:0007669"/>
    <property type="project" value="UniProtKB-KW"/>
</dbReference>
<dbReference type="GO" id="GO:0006270">
    <property type="term" value="P:DNA replication initiation"/>
    <property type="evidence" value="ECO:0007669"/>
    <property type="project" value="UniProtKB-UniRule"/>
</dbReference>
<dbReference type="GO" id="GO:0006275">
    <property type="term" value="P:regulation of DNA replication"/>
    <property type="evidence" value="ECO:0007669"/>
    <property type="project" value="UniProtKB-UniRule"/>
</dbReference>
<dbReference type="CDD" id="cd00009">
    <property type="entry name" value="AAA"/>
    <property type="match status" value="1"/>
</dbReference>
<dbReference type="CDD" id="cd06571">
    <property type="entry name" value="Bac_DnaA_C"/>
    <property type="match status" value="1"/>
</dbReference>
<dbReference type="FunFam" id="1.10.8.60:FF:000003">
    <property type="entry name" value="Chromosomal replication initiator protein DnaA"/>
    <property type="match status" value="1"/>
</dbReference>
<dbReference type="FunFam" id="3.40.50.300:FF:000668">
    <property type="entry name" value="Chromosomal replication initiator protein DnaA"/>
    <property type="match status" value="1"/>
</dbReference>
<dbReference type="Gene3D" id="1.10.1750.10">
    <property type="match status" value="1"/>
</dbReference>
<dbReference type="Gene3D" id="1.10.8.60">
    <property type="match status" value="1"/>
</dbReference>
<dbReference type="Gene3D" id="3.30.300.180">
    <property type="match status" value="1"/>
</dbReference>
<dbReference type="Gene3D" id="3.40.50.300">
    <property type="entry name" value="P-loop containing nucleotide triphosphate hydrolases"/>
    <property type="match status" value="1"/>
</dbReference>
<dbReference type="HAMAP" id="MF_00377">
    <property type="entry name" value="DnaA_bact"/>
    <property type="match status" value="1"/>
</dbReference>
<dbReference type="InterPro" id="IPR003593">
    <property type="entry name" value="AAA+_ATPase"/>
</dbReference>
<dbReference type="InterPro" id="IPR001957">
    <property type="entry name" value="Chromosome_initiator_DnaA"/>
</dbReference>
<dbReference type="InterPro" id="IPR020591">
    <property type="entry name" value="Chromosome_initiator_DnaA-like"/>
</dbReference>
<dbReference type="InterPro" id="IPR018312">
    <property type="entry name" value="Chromosome_initiator_DnaA_CS"/>
</dbReference>
<dbReference type="InterPro" id="IPR013159">
    <property type="entry name" value="DnaA_C"/>
</dbReference>
<dbReference type="InterPro" id="IPR013317">
    <property type="entry name" value="DnaA_dom"/>
</dbReference>
<dbReference type="InterPro" id="IPR024633">
    <property type="entry name" value="DnaA_N_dom"/>
</dbReference>
<dbReference type="InterPro" id="IPR038454">
    <property type="entry name" value="DnaA_N_sf"/>
</dbReference>
<dbReference type="InterPro" id="IPR027417">
    <property type="entry name" value="P-loop_NTPase"/>
</dbReference>
<dbReference type="InterPro" id="IPR010921">
    <property type="entry name" value="Trp_repressor/repl_initiator"/>
</dbReference>
<dbReference type="NCBIfam" id="TIGR00362">
    <property type="entry name" value="DnaA"/>
    <property type="match status" value="1"/>
</dbReference>
<dbReference type="PANTHER" id="PTHR30050">
    <property type="entry name" value="CHROMOSOMAL REPLICATION INITIATOR PROTEIN DNAA"/>
    <property type="match status" value="1"/>
</dbReference>
<dbReference type="PANTHER" id="PTHR30050:SF2">
    <property type="entry name" value="CHROMOSOMAL REPLICATION INITIATOR PROTEIN DNAA"/>
    <property type="match status" value="1"/>
</dbReference>
<dbReference type="Pfam" id="PF00308">
    <property type="entry name" value="Bac_DnaA"/>
    <property type="match status" value="1"/>
</dbReference>
<dbReference type="Pfam" id="PF08299">
    <property type="entry name" value="Bac_DnaA_C"/>
    <property type="match status" value="1"/>
</dbReference>
<dbReference type="Pfam" id="PF11638">
    <property type="entry name" value="DnaA_N"/>
    <property type="match status" value="1"/>
</dbReference>
<dbReference type="PRINTS" id="PR00051">
    <property type="entry name" value="DNAA"/>
</dbReference>
<dbReference type="SMART" id="SM00382">
    <property type="entry name" value="AAA"/>
    <property type="match status" value="1"/>
</dbReference>
<dbReference type="SMART" id="SM00760">
    <property type="entry name" value="Bac_DnaA_C"/>
    <property type="match status" value="1"/>
</dbReference>
<dbReference type="SUPFAM" id="SSF52540">
    <property type="entry name" value="P-loop containing nucleoside triphosphate hydrolases"/>
    <property type="match status" value="1"/>
</dbReference>
<dbReference type="SUPFAM" id="SSF48295">
    <property type="entry name" value="TrpR-like"/>
    <property type="match status" value="1"/>
</dbReference>
<dbReference type="PROSITE" id="PS01008">
    <property type="entry name" value="DNAA"/>
    <property type="match status" value="1"/>
</dbReference>
<sequence length="525" mass="57699">MNDFWQHCSALLERELTPQQYVTWIKPLAPVAFDASANTLSIAAPNRFKLDWVKSQFSGRISDLARDFWNAPIEVQFVLDPKAGMRSAAAHAAPAAQRAPLTPNGPAATVAAIAANLAANAGAAPSAPADVPMTASAAAAHHLNADDADIDLPSLPAHEAAAGRRTWRPGPGAAPANGGEADSMYERSKLNPVLTFDNFVTGKANQLARAAAIQVADNPGISYNPLFLYGGVGLGKTHLIHAIGNQLLLDKAGARIRYIHAEQYVSDVVKAYQRKAFDDFKRYYHSLDLLLIDDIQFFSGKSRTQEEFFYAFEALVANKAQVIITSDTYPKEISGIDDRLISRFDSGLTVAIEPPELEMRVAILMRKAQSEGVNLSEDVAFFVAKHLRSNVRELEGALRKILAYSKFHGREISIELTKEALKDLLTVQNRQISVENIQKTVADFYNIKVADMYSKKRPANIARPRQIAMYLAKELTQKSLPEIGELFGGRDHTTVLHAVRKIADERSKDAQLNHELHVLEQTLKG</sequence>
<keyword id="KW-0067">ATP-binding</keyword>
<keyword id="KW-0963">Cytoplasm</keyword>
<keyword id="KW-0235">DNA replication</keyword>
<keyword id="KW-0238">DNA-binding</keyword>
<keyword id="KW-0446">Lipid-binding</keyword>
<keyword id="KW-0547">Nucleotide-binding</keyword>
<reference key="1">
    <citation type="submission" date="2008-04" db="EMBL/GenBank/DDBJ databases">
        <title>Complete sequence of chromosome 1 of Burkholderia ambifaria MC40-6.</title>
        <authorList>
            <person name="Copeland A."/>
            <person name="Lucas S."/>
            <person name="Lapidus A."/>
            <person name="Glavina del Rio T."/>
            <person name="Dalin E."/>
            <person name="Tice H."/>
            <person name="Pitluck S."/>
            <person name="Chain P."/>
            <person name="Malfatti S."/>
            <person name="Shin M."/>
            <person name="Vergez L."/>
            <person name="Lang D."/>
            <person name="Schmutz J."/>
            <person name="Larimer F."/>
            <person name="Land M."/>
            <person name="Hauser L."/>
            <person name="Kyrpides N."/>
            <person name="Lykidis A."/>
            <person name="Ramette A."/>
            <person name="Konstantinidis K."/>
            <person name="Tiedje J."/>
            <person name="Richardson P."/>
        </authorList>
    </citation>
    <scope>NUCLEOTIDE SEQUENCE [LARGE SCALE GENOMIC DNA]</scope>
    <source>
        <strain>MC40-6</strain>
    </source>
</reference>
<comment type="function">
    <text evidence="1">Plays an essential role in the initiation and regulation of chromosomal replication. ATP-DnaA binds to the origin of replication (oriC) to initiate formation of the DNA replication initiation complex once per cell cycle. Binds the DnaA box (a 9 base pair repeat at the origin) and separates the double-stranded (ds)DNA. Forms a right-handed helical filament on oriC DNA; dsDNA binds to the exterior of the filament while single-stranded (ss)DNA is stabiized in the filament's interior. The ATP-DnaA-oriC complex binds and stabilizes one strand of the AT-rich DNA unwinding element (DUE), permitting loading of DNA polymerase. After initiation quickly degrades to an ADP-DnaA complex that is not apt for DNA replication. Binds acidic phospholipids.</text>
</comment>
<comment type="subunit">
    <text evidence="1">Oligomerizes as a right-handed, spiral filament on DNA at oriC.</text>
</comment>
<comment type="subcellular location">
    <subcellularLocation>
        <location evidence="1">Cytoplasm</location>
    </subcellularLocation>
</comment>
<comment type="domain">
    <text evidence="1">Domain I is involved in oligomerization and binding regulators, domain II is flexibile and of varying length in different bacteria, domain III forms the AAA+ region, while domain IV binds dsDNA.</text>
</comment>
<comment type="similarity">
    <text evidence="1">Belongs to the DnaA family.</text>
</comment>
<protein>
    <recommendedName>
        <fullName evidence="1">Chromosomal replication initiator protein DnaA</fullName>
    </recommendedName>
</protein>
<feature type="chain" id="PRO_1000121955" description="Chromosomal replication initiator protein DnaA">
    <location>
        <begin position="1"/>
        <end position="525"/>
    </location>
</feature>
<feature type="region of interest" description="Domain I, interacts with DnaA modulators" evidence="1">
    <location>
        <begin position="1"/>
        <end position="71"/>
    </location>
</feature>
<feature type="region of interest" description="Domain II" evidence="1">
    <location>
        <begin position="71"/>
        <end position="188"/>
    </location>
</feature>
<feature type="region of interest" description="Disordered" evidence="2">
    <location>
        <begin position="160"/>
        <end position="182"/>
    </location>
</feature>
<feature type="region of interest" description="Domain III, AAA+ region" evidence="1">
    <location>
        <begin position="189"/>
        <end position="405"/>
    </location>
</feature>
<feature type="region of interest" description="Domain IV, binds dsDNA" evidence="1">
    <location>
        <begin position="406"/>
        <end position="525"/>
    </location>
</feature>
<feature type="compositionally biased region" description="Low complexity" evidence="2">
    <location>
        <begin position="169"/>
        <end position="181"/>
    </location>
</feature>
<feature type="binding site" evidence="1">
    <location>
        <position position="233"/>
    </location>
    <ligand>
        <name>ATP</name>
        <dbReference type="ChEBI" id="CHEBI:30616"/>
    </ligand>
</feature>
<feature type="binding site" evidence="1">
    <location>
        <position position="235"/>
    </location>
    <ligand>
        <name>ATP</name>
        <dbReference type="ChEBI" id="CHEBI:30616"/>
    </ligand>
</feature>
<feature type="binding site" evidence="1">
    <location>
        <position position="236"/>
    </location>
    <ligand>
        <name>ATP</name>
        <dbReference type="ChEBI" id="CHEBI:30616"/>
    </ligand>
</feature>
<feature type="binding site" evidence="1">
    <location>
        <position position="237"/>
    </location>
    <ligand>
        <name>ATP</name>
        <dbReference type="ChEBI" id="CHEBI:30616"/>
    </ligand>
</feature>
<evidence type="ECO:0000255" key="1">
    <source>
        <dbReference type="HAMAP-Rule" id="MF_00377"/>
    </source>
</evidence>
<evidence type="ECO:0000256" key="2">
    <source>
        <dbReference type="SAM" id="MobiDB-lite"/>
    </source>
</evidence>
<name>DNAA_BURA4</name>
<organism>
    <name type="scientific">Burkholderia ambifaria (strain MC40-6)</name>
    <dbReference type="NCBI Taxonomy" id="398577"/>
    <lineage>
        <taxon>Bacteria</taxon>
        <taxon>Pseudomonadati</taxon>
        <taxon>Pseudomonadota</taxon>
        <taxon>Betaproteobacteria</taxon>
        <taxon>Burkholderiales</taxon>
        <taxon>Burkholderiaceae</taxon>
        <taxon>Burkholderia</taxon>
        <taxon>Burkholderia cepacia complex</taxon>
    </lineage>
</organism>